<proteinExistence type="inferred from homology"/>
<organismHost>
    <name type="scientific">Aves</name>
    <dbReference type="NCBI Taxonomy" id="8782"/>
</organismHost>
<organismHost>
    <name type="scientific">Felis catus</name>
    <name type="common">Cat</name>
    <name type="synonym">Felis silvestris catus</name>
    <dbReference type="NCBI Taxonomy" id="9685"/>
</organismHost>
<organismHost>
    <name type="scientific">Homo sapiens</name>
    <name type="common">Human</name>
    <dbReference type="NCBI Taxonomy" id="9606"/>
</organismHost>
<organismHost>
    <name type="scientific">Panthera pardus</name>
    <name type="common">Leopard</name>
    <name type="synonym">Felis pardus</name>
    <dbReference type="NCBI Taxonomy" id="9691"/>
</organismHost>
<organismHost>
    <name type="scientific">Panthera tigris</name>
    <name type="common">Tiger</name>
    <dbReference type="NCBI Taxonomy" id="9694"/>
</organismHost>
<organismHost>
    <name type="scientific">Sus scrofa</name>
    <name type="common">Pig</name>
    <dbReference type="NCBI Taxonomy" id="9823"/>
</organismHost>
<comment type="function">
    <text evidence="1">RNA-dependent RNA polymerase which is responsible for replication and transcription of virus RNA segments. The transcription of viral mRNAs occurs by a unique mechanism called cap-snatching. 5' methylated caps of cellular mRNAs are cleaved after 10-13 nucleotides by PA. In turn, these short capped RNAs are used as primers by PB1 for transcription of viral mRNAs. During virus replication, PB1 initiates RNA synthesis and copy vRNA into complementary RNA (cRNA) which in turn serves as a template for the production of more vRNAs.</text>
</comment>
<comment type="catalytic activity">
    <reaction evidence="1">
        <text>RNA(n) + a ribonucleoside 5'-triphosphate = RNA(n+1) + diphosphate</text>
        <dbReference type="Rhea" id="RHEA:21248"/>
        <dbReference type="Rhea" id="RHEA-COMP:14527"/>
        <dbReference type="Rhea" id="RHEA-COMP:17342"/>
        <dbReference type="ChEBI" id="CHEBI:33019"/>
        <dbReference type="ChEBI" id="CHEBI:61557"/>
        <dbReference type="ChEBI" id="CHEBI:140395"/>
        <dbReference type="EC" id="2.7.7.48"/>
    </reaction>
</comment>
<comment type="subunit">
    <text evidence="1">Influenza RNA polymerase is composed of three subunits: PB1, PB2 and PA. Interacts (via N-terminus) with PA (via C-terminus). Interacts (via C-terminus) with PB2 (via N-terminus); this interaction is essential for transcription initiation.</text>
</comment>
<comment type="subcellular location">
    <subcellularLocation>
        <location evidence="1">Host nucleus</location>
    </subcellularLocation>
    <subcellularLocation>
        <location evidence="1">Host cytoplasm</location>
    </subcellularLocation>
</comment>
<comment type="PTM">
    <text evidence="1">Phosphorylated by host PRKCA.</text>
</comment>
<comment type="similarity">
    <text evidence="1">Belongs to the influenza viruses polymerase PB1 family.</text>
</comment>
<feature type="chain" id="PRO_0000311164" description="RNA-directed RNA polymerase catalytic subunit">
    <location>
        <begin position="1"/>
        <end position="757"/>
    </location>
</feature>
<feature type="domain" description="RdRp catalytic" evidence="1">
    <location>
        <begin position="286"/>
        <end position="483"/>
    </location>
</feature>
<feature type="region of interest" description="Disordered" evidence="2">
    <location>
        <begin position="50"/>
        <end position="81"/>
    </location>
</feature>
<feature type="region of interest" description="Promoter-binding site" evidence="1">
    <location>
        <begin position="249"/>
        <end position="256"/>
    </location>
</feature>
<feature type="short sequence motif" description="Nuclear localization signal" evidence="1">
    <location>
        <begin position="187"/>
        <end position="195"/>
    </location>
</feature>
<feature type="short sequence motif" description="Nuclear localization signal" evidence="1">
    <location>
        <begin position="203"/>
        <end position="216"/>
    </location>
</feature>
<feature type="compositionally biased region" description="Polar residues" evidence="2">
    <location>
        <begin position="55"/>
        <end position="64"/>
    </location>
</feature>
<dbReference type="EC" id="2.7.7.48" evidence="1"/>
<dbReference type="EMBL" id="AY651677">
    <property type="protein sequence ID" value="AAT73508.2"/>
    <property type="molecule type" value="Genomic_RNA"/>
</dbReference>
<dbReference type="SMR" id="Q6DNS5"/>
<dbReference type="GO" id="GO:0030430">
    <property type="term" value="C:host cell cytoplasm"/>
    <property type="evidence" value="ECO:0007669"/>
    <property type="project" value="UniProtKB-SubCell"/>
</dbReference>
<dbReference type="GO" id="GO:0042025">
    <property type="term" value="C:host cell nucleus"/>
    <property type="evidence" value="ECO:0007669"/>
    <property type="project" value="UniProtKB-SubCell"/>
</dbReference>
<dbReference type="GO" id="GO:0000166">
    <property type="term" value="F:nucleotide binding"/>
    <property type="evidence" value="ECO:0007669"/>
    <property type="project" value="UniProtKB-UniRule"/>
</dbReference>
<dbReference type="GO" id="GO:0003723">
    <property type="term" value="F:RNA binding"/>
    <property type="evidence" value="ECO:0007669"/>
    <property type="project" value="InterPro"/>
</dbReference>
<dbReference type="GO" id="GO:0003968">
    <property type="term" value="F:RNA-directed RNA polymerase activity"/>
    <property type="evidence" value="ECO:0007669"/>
    <property type="project" value="UniProtKB-UniRule"/>
</dbReference>
<dbReference type="GO" id="GO:0006351">
    <property type="term" value="P:DNA-templated transcription"/>
    <property type="evidence" value="ECO:0007669"/>
    <property type="project" value="UniProtKB-UniRule"/>
</dbReference>
<dbReference type="GO" id="GO:0039657">
    <property type="term" value="P:symbiont-mediated suppression of host gene expression"/>
    <property type="evidence" value="ECO:0007669"/>
    <property type="project" value="UniProtKB-KW"/>
</dbReference>
<dbReference type="GO" id="GO:0039523">
    <property type="term" value="P:symbiont-mediated suppression of host mRNA transcription via inhibition of RNA polymerase II activity"/>
    <property type="evidence" value="ECO:0007669"/>
    <property type="project" value="UniProtKB-UniRule"/>
</dbReference>
<dbReference type="GO" id="GO:0039694">
    <property type="term" value="P:viral RNA genome replication"/>
    <property type="evidence" value="ECO:0007669"/>
    <property type="project" value="UniProtKB-UniRule"/>
</dbReference>
<dbReference type="GO" id="GO:0019083">
    <property type="term" value="P:viral transcription"/>
    <property type="evidence" value="ECO:0007669"/>
    <property type="project" value="UniProtKB-KW"/>
</dbReference>
<dbReference type="Gene3D" id="6.10.140.720">
    <property type="match status" value="1"/>
</dbReference>
<dbReference type="HAMAP" id="MF_04065">
    <property type="entry name" value="INFV_RDRP"/>
    <property type="match status" value="1"/>
</dbReference>
<dbReference type="InterPro" id="IPR007099">
    <property type="entry name" value="RNA-dir_pol_NSvirus"/>
</dbReference>
<dbReference type="InterPro" id="IPR001407">
    <property type="entry name" value="RNA_pol_PB1_influenza"/>
</dbReference>
<dbReference type="Pfam" id="PF00602">
    <property type="entry name" value="Flu_PB1"/>
    <property type="match status" value="1"/>
</dbReference>
<dbReference type="PIRSF" id="PIRSF000827">
    <property type="entry name" value="RdRPol_OMV"/>
    <property type="match status" value="1"/>
</dbReference>
<dbReference type="PROSITE" id="PS50525">
    <property type="entry name" value="RDRP_SSRNA_NEG_SEG"/>
    <property type="match status" value="1"/>
</dbReference>
<reference key="1">
    <citation type="journal article" date="2004" name="Nature">
        <title>Genesis of a highly pathogenic and potentially pandemic H5N1 influenza virus in eastern Asia.</title>
        <authorList>
            <person name="Li K.S."/>
            <person name="Guan Y."/>
            <person name="Wang J."/>
            <person name="Smith G.J.D."/>
            <person name="Xu K.M."/>
            <person name="Duan L."/>
            <person name="Rahardjo A.P."/>
            <person name="Puthavathana P."/>
            <person name="Buranathai C."/>
            <person name="Nguyen T.D."/>
            <person name="Estoepangestie A.T.S."/>
            <person name="Chaisingh A."/>
            <person name="Auewarakul P."/>
            <person name="Long H.T."/>
            <person name="Hanh N.T.H."/>
            <person name="Webby R.J."/>
            <person name="Poon L.L.M."/>
            <person name="Chen H."/>
            <person name="Shortridge K.F."/>
            <person name="Yuen K.Y."/>
            <person name="Webster R.G."/>
            <person name="Peiris J.S.M."/>
        </authorList>
    </citation>
    <scope>NUCLEOTIDE SEQUENCE [GENOMIC RNA]</scope>
</reference>
<reference key="2">
    <citation type="submission" date="2008-03" db="EMBL/GenBank/DDBJ databases">
        <authorList>
            <person name="Li K.S."/>
            <person name="Guan Y."/>
            <person name="Wang J."/>
            <person name="Smith G.J.D."/>
            <person name="Xu K.M."/>
            <person name="Duan L."/>
            <person name="Rahardjo A.P."/>
            <person name="Puthavathana P."/>
            <person name="Buranathai C."/>
            <person name="Nguyen T.D."/>
            <person name="Estoepangestie A.T.S."/>
            <person name="Chaisingh A."/>
            <person name="Auewarakul P."/>
            <person name="Long H.T."/>
            <person name="Hanh N.T.H."/>
            <person name="Lim W."/>
            <person name="Webby R.J."/>
            <person name="Poon L.L.M."/>
            <person name="Chen H."/>
            <person name="Shortridge K.F."/>
            <person name="Yuen K.Y."/>
            <person name="Webster R.G."/>
            <person name="Peiris J.S.M."/>
        </authorList>
    </citation>
    <scope>SEQUENCE REVISION</scope>
</reference>
<protein>
    <recommendedName>
        <fullName evidence="1">RNA-directed RNA polymerase catalytic subunit</fullName>
        <ecNumber evidence="1">2.7.7.48</ecNumber>
    </recommendedName>
    <alternativeName>
        <fullName evidence="1">Polymerase basic protein 1</fullName>
        <shortName evidence="1">PB1</shortName>
    </alternativeName>
    <alternativeName>
        <fullName evidence="1">RNA-directed RNA polymerase subunit P1</fullName>
    </alternativeName>
</protein>
<evidence type="ECO:0000255" key="1">
    <source>
        <dbReference type="HAMAP-Rule" id="MF_04065"/>
    </source>
</evidence>
<evidence type="ECO:0000256" key="2">
    <source>
        <dbReference type="SAM" id="MobiDB-lite"/>
    </source>
</evidence>
<sequence length="757" mass="86505">MDVNPTLLFLKVPAQNAISTTFPYTGDPPYSHGTGTGYTMDTVNRTHQYSEKGKWTTNTETGAPQLNPIDGPLPENHEPSGYAQTDCVLEAMAFLEESHPGIFENSCLETMEVVQQTRVDKLTQGRQTYDWTLNRNQPAATALANTIEVFRSNDLTANESGRLIDFLKDVMESMDKEEMEITTHFQRKRRIRDNMTKKMVTQRTIGKKKQRLNKKSYLIRALTLNTMTKDAERGKLKRRAIATPGMQIRGFVYFVETLARSICEKLEQSGLPVGGNEKKAKLANVVRKMMTNSQDTELSFTITGDNTKWNENQNPRMFLAMITYITRNQPDWFRNVLSIAPIMFSNKMARLGKGYMFESKSMKLRTQIPAEMLANIDLKYFNESTRKKIEKIRPLLIDGTASLSPGMMMGMFNMLSTVLGVSILNLGQKRYTKTTYWWDGLQSSDDFALIVNAPNHEGIQAGVDRFYRTCKLVGINMSKKKSYINRTGTFEFTSFFYRYGFVANFSMELPSFGVSGINESADMSIGVTVIKNNMINNDLGPATAQMALQLFIKDYRYTYRCHRGDTQIQTRRSFELKKLWEQTRSKAGLLVSDGGPNLYNIRNLHIPEVCLKWELMDEDYQGRLCNPLNPFVSHKEIESVNNAVVMPAHGPAKSMEYDAVATTHSWIPKRNRSILNTSQRGILEDEQMYQKCCNLFEKFFPSSSYRRPVGISSMVEAMVSRARIDARIDFESGRIKKEEFAEIMKICSTIEELRRQK</sequence>
<keyword id="KW-1262">Eukaryotic host gene expression shutoff by virus</keyword>
<keyword id="KW-1191">Eukaryotic host transcription shutoff by virus</keyword>
<keyword id="KW-1035">Host cytoplasm</keyword>
<keyword id="KW-1190">Host gene expression shutoff by virus</keyword>
<keyword id="KW-1048">Host nucleus</keyword>
<keyword id="KW-0945">Host-virus interaction</keyword>
<keyword id="KW-1104">Inhibition of host RNA polymerase II by virus</keyword>
<keyword id="KW-0547">Nucleotide-binding</keyword>
<keyword id="KW-0548">Nucleotidyltransferase</keyword>
<keyword id="KW-0597">Phosphoprotein</keyword>
<keyword id="KW-0696">RNA-directed RNA polymerase</keyword>
<keyword id="KW-0808">Transferase</keyword>
<keyword id="KW-0693">Viral RNA replication</keyword>
<keyword id="KW-1195">Viral transcription</keyword>
<name>RDRP_I02A2</name>
<accession>Q6DNS5</accession>
<gene>
    <name evidence="1" type="primary">PB1</name>
</gene>
<organism>
    <name type="scientific">Influenza A virus (strain A/Chicken/Hong Kong/31.2/2002 H5N1 genotype X1)</name>
    <dbReference type="NCBI Taxonomy" id="284169"/>
    <lineage>
        <taxon>Viruses</taxon>
        <taxon>Riboviria</taxon>
        <taxon>Orthornavirae</taxon>
        <taxon>Negarnaviricota</taxon>
        <taxon>Polyploviricotina</taxon>
        <taxon>Insthoviricetes</taxon>
        <taxon>Articulavirales</taxon>
        <taxon>Orthomyxoviridae</taxon>
        <taxon>Alphainfluenzavirus</taxon>
        <taxon>Alphainfluenzavirus influenzae</taxon>
        <taxon>Influenza A virus</taxon>
    </lineage>
</organism>